<feature type="chain" id="PRO_0000112421" description="N-acetyl-gamma-glutamyl-phosphate reductase">
    <location>
        <begin position="1"/>
        <end position="336"/>
    </location>
</feature>
<feature type="active site" evidence="1">
    <location>
        <position position="156"/>
    </location>
</feature>
<accession>Q9K4Z6</accession>
<gene>
    <name evidence="1" type="primary">argC</name>
</gene>
<name>ARGC_MORPR</name>
<dbReference type="EC" id="1.2.1.38" evidence="1"/>
<dbReference type="EMBL" id="AJ252020">
    <property type="protein sequence ID" value="CAB95014.1"/>
    <property type="molecule type" value="Genomic_DNA"/>
</dbReference>
<dbReference type="SMR" id="Q9K4Z6"/>
<dbReference type="UniPathway" id="UPA00068">
    <property type="reaction ID" value="UER00108"/>
</dbReference>
<dbReference type="GO" id="GO:0005737">
    <property type="term" value="C:cytoplasm"/>
    <property type="evidence" value="ECO:0007669"/>
    <property type="project" value="UniProtKB-SubCell"/>
</dbReference>
<dbReference type="GO" id="GO:0003942">
    <property type="term" value="F:N-acetyl-gamma-glutamyl-phosphate reductase activity"/>
    <property type="evidence" value="ECO:0007669"/>
    <property type="project" value="UniProtKB-UniRule"/>
</dbReference>
<dbReference type="GO" id="GO:0051287">
    <property type="term" value="F:NAD binding"/>
    <property type="evidence" value="ECO:0007669"/>
    <property type="project" value="InterPro"/>
</dbReference>
<dbReference type="GO" id="GO:0070401">
    <property type="term" value="F:NADP+ binding"/>
    <property type="evidence" value="ECO:0007669"/>
    <property type="project" value="InterPro"/>
</dbReference>
<dbReference type="GO" id="GO:0006526">
    <property type="term" value="P:L-arginine biosynthetic process"/>
    <property type="evidence" value="ECO:0007669"/>
    <property type="project" value="UniProtKB-UniRule"/>
</dbReference>
<dbReference type="CDD" id="cd23934">
    <property type="entry name" value="AGPR_1_C"/>
    <property type="match status" value="1"/>
</dbReference>
<dbReference type="CDD" id="cd17895">
    <property type="entry name" value="AGPR_1_N"/>
    <property type="match status" value="1"/>
</dbReference>
<dbReference type="FunFam" id="3.30.360.10:FF:000014">
    <property type="entry name" value="N-acetyl-gamma-glutamyl-phosphate reductase"/>
    <property type="match status" value="1"/>
</dbReference>
<dbReference type="Gene3D" id="3.30.360.10">
    <property type="entry name" value="Dihydrodipicolinate Reductase, domain 2"/>
    <property type="match status" value="1"/>
</dbReference>
<dbReference type="Gene3D" id="3.40.50.720">
    <property type="entry name" value="NAD(P)-binding Rossmann-like Domain"/>
    <property type="match status" value="1"/>
</dbReference>
<dbReference type="HAMAP" id="MF_00150">
    <property type="entry name" value="ArgC_type1"/>
    <property type="match status" value="1"/>
</dbReference>
<dbReference type="InterPro" id="IPR023013">
    <property type="entry name" value="AGPR_AS"/>
</dbReference>
<dbReference type="InterPro" id="IPR000706">
    <property type="entry name" value="AGPR_type-1"/>
</dbReference>
<dbReference type="InterPro" id="IPR036291">
    <property type="entry name" value="NAD(P)-bd_dom_sf"/>
</dbReference>
<dbReference type="InterPro" id="IPR050085">
    <property type="entry name" value="NAGSA_dehydrogenase"/>
</dbReference>
<dbReference type="InterPro" id="IPR000534">
    <property type="entry name" value="Semialdehyde_DH_NAD-bd"/>
</dbReference>
<dbReference type="NCBIfam" id="TIGR01850">
    <property type="entry name" value="argC"/>
    <property type="match status" value="1"/>
</dbReference>
<dbReference type="PANTHER" id="PTHR32338:SF10">
    <property type="entry name" value="N-ACETYL-GAMMA-GLUTAMYL-PHOSPHATE REDUCTASE, CHLOROPLASTIC-RELATED"/>
    <property type="match status" value="1"/>
</dbReference>
<dbReference type="PANTHER" id="PTHR32338">
    <property type="entry name" value="N-ACETYL-GAMMA-GLUTAMYL-PHOSPHATE REDUCTASE, CHLOROPLASTIC-RELATED-RELATED"/>
    <property type="match status" value="1"/>
</dbReference>
<dbReference type="Pfam" id="PF01118">
    <property type="entry name" value="Semialdhyde_dh"/>
    <property type="match status" value="1"/>
</dbReference>
<dbReference type="Pfam" id="PF22698">
    <property type="entry name" value="Semialdhyde_dhC_1"/>
    <property type="match status" value="1"/>
</dbReference>
<dbReference type="SMART" id="SM00859">
    <property type="entry name" value="Semialdhyde_dh"/>
    <property type="match status" value="1"/>
</dbReference>
<dbReference type="SUPFAM" id="SSF55347">
    <property type="entry name" value="Glyceraldehyde-3-phosphate dehydrogenase-like, C-terminal domain"/>
    <property type="match status" value="1"/>
</dbReference>
<dbReference type="SUPFAM" id="SSF51735">
    <property type="entry name" value="NAD(P)-binding Rossmann-fold domains"/>
    <property type="match status" value="1"/>
</dbReference>
<dbReference type="PROSITE" id="PS01224">
    <property type="entry name" value="ARGC"/>
    <property type="match status" value="1"/>
</dbReference>
<sequence length="336" mass="36107">MLKTILVGATGYTGAELAHYITKHPELELAGLYVSEHSLDAGKPFSSLYGHLLGVVDQTIEPLAVSNIKNICDDVDIVVLATAHEVSHDIAAEFLAQDTVVFDLSGAFRVNDPAFYENYYGFKHNFDKELQSAVYGLAEWASADIAEANLIAVPGCYPTASLSALKPLAKHGLISTDQKPIINAVSGVSGAGRKASLASAFCEVSHAPYGVFNHRHQPEISTHLGHEVIFTPHLGSFKRGILATINVKLAAGVTPEQVTAAYQEAYQDQPMVRLLPSGWPSIKAVEKTAYCDLAWQQQGQDLIVVSAIDNLLKGAAAQAMQCINIRFGFAMTTSLV</sequence>
<protein>
    <recommendedName>
        <fullName evidence="1">N-acetyl-gamma-glutamyl-phosphate reductase</fullName>
        <shortName evidence="1">AGPR</shortName>
        <ecNumber evidence="1">1.2.1.38</ecNumber>
    </recommendedName>
    <alternativeName>
        <fullName evidence="1">N-acetyl-glutamate semialdehyde dehydrogenase</fullName>
        <shortName evidence="1">NAGSA dehydrogenase</shortName>
    </alternativeName>
</protein>
<reference key="1">
    <citation type="journal article" date="2000" name="J. Bacteriol.">
        <title>Evolution of arginine biosynthesis in the bacterial domain: novel gene-enzyme relationships from psychrophilic Moritella strains (Vibrionaceae) and evolutionary significance of N-alpha-acetyl ornithinase.</title>
        <authorList>
            <person name="Xu Y."/>
            <person name="Liang Z."/>
            <person name="Legrain C."/>
            <person name="Ruger H.J."/>
            <person name="Glansdorff N."/>
        </authorList>
    </citation>
    <scope>NUCLEOTIDE SEQUENCE [GENOMIC DNA]</scope>
    <source>
        <strain>2674</strain>
    </source>
</reference>
<organism>
    <name type="scientific">Moritella profunda</name>
    <dbReference type="NCBI Taxonomy" id="111291"/>
    <lineage>
        <taxon>Bacteria</taxon>
        <taxon>Pseudomonadati</taxon>
        <taxon>Pseudomonadota</taxon>
        <taxon>Gammaproteobacteria</taxon>
        <taxon>Alteromonadales</taxon>
        <taxon>Moritellaceae</taxon>
        <taxon>Moritella</taxon>
    </lineage>
</organism>
<comment type="function">
    <text evidence="1">Catalyzes the NADPH-dependent reduction of N-acetyl-5-glutamyl phosphate to yield N-acetyl-L-glutamate 5-semialdehyde.</text>
</comment>
<comment type="catalytic activity">
    <reaction evidence="1">
        <text>N-acetyl-L-glutamate 5-semialdehyde + phosphate + NADP(+) = N-acetyl-L-glutamyl 5-phosphate + NADPH + H(+)</text>
        <dbReference type="Rhea" id="RHEA:21588"/>
        <dbReference type="ChEBI" id="CHEBI:15378"/>
        <dbReference type="ChEBI" id="CHEBI:29123"/>
        <dbReference type="ChEBI" id="CHEBI:43474"/>
        <dbReference type="ChEBI" id="CHEBI:57783"/>
        <dbReference type="ChEBI" id="CHEBI:57936"/>
        <dbReference type="ChEBI" id="CHEBI:58349"/>
        <dbReference type="EC" id="1.2.1.38"/>
    </reaction>
</comment>
<comment type="pathway">
    <text evidence="1">Amino-acid biosynthesis; L-arginine biosynthesis; N(2)-acetyl-L-ornithine from L-glutamate: step 3/4.</text>
</comment>
<comment type="subcellular location">
    <subcellularLocation>
        <location evidence="1">Cytoplasm</location>
    </subcellularLocation>
</comment>
<comment type="similarity">
    <text evidence="1">Belongs to the NAGSA dehydrogenase family. Type 1 subfamily.</text>
</comment>
<evidence type="ECO:0000255" key="1">
    <source>
        <dbReference type="HAMAP-Rule" id="MF_00150"/>
    </source>
</evidence>
<keyword id="KW-0028">Amino-acid biosynthesis</keyword>
<keyword id="KW-0055">Arginine biosynthesis</keyword>
<keyword id="KW-0963">Cytoplasm</keyword>
<keyword id="KW-0521">NADP</keyword>
<keyword id="KW-0560">Oxidoreductase</keyword>
<proteinExistence type="inferred from homology"/>